<feature type="chain" id="PRO_1000184326" description="ATP synthase subunit c">
    <location>
        <begin position="1"/>
        <end position="72"/>
    </location>
</feature>
<feature type="transmembrane region" description="Helical" evidence="1">
    <location>
        <begin position="1"/>
        <end position="21"/>
    </location>
</feature>
<feature type="transmembrane region" description="Helical" evidence="1">
    <location>
        <begin position="49"/>
        <end position="69"/>
    </location>
</feature>
<feature type="site" description="Reversibly protonated during proton transport" evidence="1">
    <location>
        <position position="56"/>
    </location>
</feature>
<protein>
    <recommendedName>
        <fullName evidence="1">ATP synthase subunit c</fullName>
    </recommendedName>
    <alternativeName>
        <fullName evidence="1">ATP synthase F(0) sector subunit c</fullName>
    </alternativeName>
    <alternativeName>
        <fullName evidence="1">F-type ATPase subunit c</fullName>
        <shortName evidence="1">F-ATPase subunit c</shortName>
    </alternativeName>
    <alternativeName>
        <fullName evidence="1">Lipid-binding protein</fullName>
    </alternativeName>
</protein>
<evidence type="ECO:0000255" key="1">
    <source>
        <dbReference type="HAMAP-Rule" id="MF_01396"/>
    </source>
</evidence>
<accession>B7IQW3</accession>
<reference key="1">
    <citation type="submission" date="2008-10" db="EMBL/GenBank/DDBJ databases">
        <title>Genome sequence of Bacillus cereus G9842.</title>
        <authorList>
            <person name="Dodson R.J."/>
            <person name="Durkin A.S."/>
            <person name="Rosovitz M.J."/>
            <person name="Rasko D.A."/>
            <person name="Hoffmaster A."/>
            <person name="Ravel J."/>
            <person name="Sutton G."/>
        </authorList>
    </citation>
    <scope>NUCLEOTIDE SEQUENCE [LARGE SCALE GENOMIC DNA]</scope>
    <source>
        <strain>G9842</strain>
    </source>
</reference>
<comment type="function">
    <text evidence="1">F(1)F(0) ATP synthase produces ATP from ADP in the presence of a proton or sodium gradient. F-type ATPases consist of two structural domains, F(1) containing the extramembraneous catalytic core and F(0) containing the membrane proton channel, linked together by a central stalk and a peripheral stalk. During catalysis, ATP synthesis in the catalytic domain of F(1) is coupled via a rotary mechanism of the central stalk subunits to proton translocation.</text>
</comment>
<comment type="function">
    <text evidence="1">Key component of the F(0) channel; it plays a direct role in translocation across the membrane. A homomeric c-ring of between 10-14 subunits forms the central stalk rotor element with the F(1) delta and epsilon subunits.</text>
</comment>
<comment type="subunit">
    <text evidence="1">F-type ATPases have 2 components, F(1) - the catalytic core - and F(0) - the membrane proton channel. F(1) has five subunits: alpha(3), beta(3), gamma(1), delta(1), epsilon(1). F(0) has three main subunits: a(1), b(2) and c(10-14). The alpha and beta chains form an alternating ring which encloses part of the gamma chain. F(1) is attached to F(0) by a central stalk formed by the gamma and epsilon chains, while a peripheral stalk is formed by the delta and b chains.</text>
</comment>
<comment type="subcellular location">
    <subcellularLocation>
        <location evidence="1">Cell membrane</location>
        <topology evidence="1">Multi-pass membrane protein</topology>
    </subcellularLocation>
</comment>
<comment type="similarity">
    <text evidence="1">Belongs to the ATPase C chain family.</text>
</comment>
<dbReference type="EMBL" id="CP001186">
    <property type="protein sequence ID" value="ACK93187.1"/>
    <property type="molecule type" value="Genomic_DNA"/>
</dbReference>
<dbReference type="RefSeq" id="WP_000052064.1">
    <property type="nucleotide sequence ID" value="NC_011772.1"/>
</dbReference>
<dbReference type="SMR" id="B7IQW3"/>
<dbReference type="GeneID" id="93005813"/>
<dbReference type="KEGG" id="bcg:BCG9842_B5519"/>
<dbReference type="HOGENOM" id="CLU_148047_1_1_9"/>
<dbReference type="Proteomes" id="UP000006744">
    <property type="component" value="Chromosome"/>
</dbReference>
<dbReference type="GO" id="GO:0005886">
    <property type="term" value="C:plasma membrane"/>
    <property type="evidence" value="ECO:0007669"/>
    <property type="project" value="UniProtKB-SubCell"/>
</dbReference>
<dbReference type="GO" id="GO:0045259">
    <property type="term" value="C:proton-transporting ATP synthase complex"/>
    <property type="evidence" value="ECO:0007669"/>
    <property type="project" value="UniProtKB-KW"/>
</dbReference>
<dbReference type="GO" id="GO:0033177">
    <property type="term" value="C:proton-transporting two-sector ATPase complex, proton-transporting domain"/>
    <property type="evidence" value="ECO:0007669"/>
    <property type="project" value="InterPro"/>
</dbReference>
<dbReference type="GO" id="GO:0008289">
    <property type="term" value="F:lipid binding"/>
    <property type="evidence" value="ECO:0007669"/>
    <property type="project" value="UniProtKB-KW"/>
</dbReference>
<dbReference type="GO" id="GO:0046933">
    <property type="term" value="F:proton-transporting ATP synthase activity, rotational mechanism"/>
    <property type="evidence" value="ECO:0007669"/>
    <property type="project" value="UniProtKB-UniRule"/>
</dbReference>
<dbReference type="CDD" id="cd18185">
    <property type="entry name" value="ATP-synt_Fo_c_ATPE"/>
    <property type="match status" value="1"/>
</dbReference>
<dbReference type="FunFam" id="1.20.20.10:FF:000004">
    <property type="entry name" value="ATP synthase subunit c"/>
    <property type="match status" value="1"/>
</dbReference>
<dbReference type="Gene3D" id="1.20.20.10">
    <property type="entry name" value="F1F0 ATP synthase subunit C"/>
    <property type="match status" value="1"/>
</dbReference>
<dbReference type="HAMAP" id="MF_01396">
    <property type="entry name" value="ATP_synth_c_bact"/>
    <property type="match status" value="1"/>
</dbReference>
<dbReference type="InterPro" id="IPR005953">
    <property type="entry name" value="ATP_synth_csu_bac/chlpt"/>
</dbReference>
<dbReference type="InterPro" id="IPR000454">
    <property type="entry name" value="ATP_synth_F0_csu"/>
</dbReference>
<dbReference type="InterPro" id="IPR020537">
    <property type="entry name" value="ATP_synth_F0_csu_DDCD_BS"/>
</dbReference>
<dbReference type="InterPro" id="IPR038662">
    <property type="entry name" value="ATP_synth_F0_csu_sf"/>
</dbReference>
<dbReference type="InterPro" id="IPR002379">
    <property type="entry name" value="ATPase_proteolipid_c-like_dom"/>
</dbReference>
<dbReference type="InterPro" id="IPR035921">
    <property type="entry name" value="F/V-ATP_Csub_sf"/>
</dbReference>
<dbReference type="NCBIfam" id="TIGR01260">
    <property type="entry name" value="ATP_synt_c"/>
    <property type="match status" value="1"/>
</dbReference>
<dbReference type="NCBIfam" id="NF005363">
    <property type="entry name" value="PRK06876.1"/>
    <property type="match status" value="1"/>
</dbReference>
<dbReference type="PANTHER" id="PTHR10031">
    <property type="entry name" value="ATP SYNTHASE LIPID-BINDING PROTEIN, MITOCHONDRIAL"/>
    <property type="match status" value="1"/>
</dbReference>
<dbReference type="PANTHER" id="PTHR10031:SF0">
    <property type="entry name" value="ATPASE PROTEIN 9"/>
    <property type="match status" value="1"/>
</dbReference>
<dbReference type="Pfam" id="PF00137">
    <property type="entry name" value="ATP-synt_C"/>
    <property type="match status" value="1"/>
</dbReference>
<dbReference type="PRINTS" id="PR00124">
    <property type="entry name" value="ATPASEC"/>
</dbReference>
<dbReference type="SUPFAM" id="SSF81333">
    <property type="entry name" value="F1F0 ATP synthase subunit C"/>
    <property type="match status" value="1"/>
</dbReference>
<dbReference type="PROSITE" id="PS00605">
    <property type="entry name" value="ATPASE_C"/>
    <property type="match status" value="1"/>
</dbReference>
<organism>
    <name type="scientific">Bacillus cereus (strain G9842)</name>
    <dbReference type="NCBI Taxonomy" id="405531"/>
    <lineage>
        <taxon>Bacteria</taxon>
        <taxon>Bacillati</taxon>
        <taxon>Bacillota</taxon>
        <taxon>Bacilli</taxon>
        <taxon>Bacillales</taxon>
        <taxon>Bacillaceae</taxon>
        <taxon>Bacillus</taxon>
        <taxon>Bacillus cereus group</taxon>
    </lineage>
</organism>
<proteinExistence type="inferred from homology"/>
<name>ATPL_BACC2</name>
<keyword id="KW-0066">ATP synthesis</keyword>
<keyword id="KW-1003">Cell membrane</keyword>
<keyword id="KW-0138">CF(0)</keyword>
<keyword id="KW-0375">Hydrogen ion transport</keyword>
<keyword id="KW-0406">Ion transport</keyword>
<keyword id="KW-0446">Lipid-binding</keyword>
<keyword id="KW-0472">Membrane</keyword>
<keyword id="KW-0812">Transmembrane</keyword>
<keyword id="KW-1133">Transmembrane helix</keyword>
<keyword id="KW-0813">Transport</keyword>
<gene>
    <name evidence="1" type="primary">atpE</name>
    <name type="ordered locus">BCG9842_B5519</name>
</gene>
<sequence length="72" mass="7213">MSLGVIAAAIAIGLSALGAGIGNGLIVSRTIEGVARQPELKGALQTIMFIGVALVEALPIIGVVIAFIVMNK</sequence>